<evidence type="ECO:0000250" key="1"/>
<evidence type="ECO:0000250" key="2">
    <source>
        <dbReference type="UniProtKB" id="P04150"/>
    </source>
</evidence>
<evidence type="ECO:0000250" key="3">
    <source>
        <dbReference type="UniProtKB" id="P06536"/>
    </source>
</evidence>
<evidence type="ECO:0000250" key="4">
    <source>
        <dbReference type="UniProtKB" id="P06537"/>
    </source>
</evidence>
<evidence type="ECO:0000255" key="5">
    <source>
        <dbReference type="PROSITE-ProRule" id="PRU00407"/>
    </source>
</evidence>
<evidence type="ECO:0000255" key="6">
    <source>
        <dbReference type="PROSITE-ProRule" id="PRU01189"/>
    </source>
</evidence>
<evidence type="ECO:0000256" key="7">
    <source>
        <dbReference type="SAM" id="MobiDB-lite"/>
    </source>
</evidence>
<evidence type="ECO:0000269" key="8">
    <source>
    </source>
</evidence>
<evidence type="ECO:0000305" key="9"/>
<organism>
    <name type="scientific">Callithrix jacchus</name>
    <name type="common">White-tufted-ear marmoset</name>
    <dbReference type="NCBI Taxonomy" id="9483"/>
    <lineage>
        <taxon>Eukaryota</taxon>
        <taxon>Metazoa</taxon>
        <taxon>Chordata</taxon>
        <taxon>Craniata</taxon>
        <taxon>Vertebrata</taxon>
        <taxon>Euteleostomi</taxon>
        <taxon>Mammalia</taxon>
        <taxon>Eutheria</taxon>
        <taxon>Euarchontoglires</taxon>
        <taxon>Primates</taxon>
        <taxon>Haplorrhini</taxon>
        <taxon>Platyrrhini</taxon>
        <taxon>Cebidae</taxon>
        <taxon>Callitrichinae</taxon>
        <taxon>Callithrix</taxon>
        <taxon>Callithrix</taxon>
    </lineage>
</organism>
<feature type="chain" id="PRO_0000250494" description="Glucocorticoid receptor">
    <location>
        <begin position="1"/>
        <end position="777"/>
    </location>
</feature>
<feature type="domain" description="NR LBD" evidence="6">
    <location>
        <begin position="524"/>
        <end position="758"/>
    </location>
</feature>
<feature type="DNA-binding region" description="Nuclear receptor" evidence="5">
    <location>
        <begin position="421"/>
        <end position="486"/>
    </location>
</feature>
<feature type="zinc finger region" description="NR C4-type" evidence="5">
    <location>
        <begin position="421"/>
        <end position="441"/>
    </location>
</feature>
<feature type="zinc finger region" description="NR C4-type" evidence="5">
    <location>
        <begin position="457"/>
        <end position="481"/>
    </location>
</feature>
<feature type="region of interest" description="Modulating">
    <location>
        <begin position="1"/>
        <end position="420"/>
    </location>
</feature>
<feature type="region of interest" description="Disordered" evidence="7">
    <location>
        <begin position="1"/>
        <end position="21"/>
    </location>
</feature>
<feature type="region of interest" description="Disordered" evidence="7">
    <location>
        <begin position="130"/>
        <end position="182"/>
    </location>
</feature>
<feature type="region of interest" description="Disordered" evidence="7">
    <location>
        <begin position="394"/>
        <end position="415"/>
    </location>
</feature>
<feature type="region of interest" description="Interaction with CLOCK" evidence="1">
    <location>
        <begin position="485"/>
        <end position="777"/>
    </location>
</feature>
<feature type="region of interest" description="Hinge">
    <location>
        <begin position="487"/>
        <end position="523"/>
    </location>
</feature>
<feature type="region of interest" description="Interaction with CRY1" evidence="1">
    <location>
        <begin position="532"/>
        <end position="697"/>
    </location>
</feature>
<feature type="compositionally biased region" description="Basic and acidic residues" evidence="7">
    <location>
        <begin position="1"/>
        <end position="14"/>
    </location>
</feature>
<feature type="compositionally biased region" description="Low complexity" evidence="7">
    <location>
        <begin position="134"/>
        <end position="150"/>
    </location>
</feature>
<feature type="compositionally biased region" description="Basic and acidic residues" evidence="7">
    <location>
        <begin position="151"/>
        <end position="163"/>
    </location>
</feature>
<feature type="compositionally biased region" description="Polar residues" evidence="7">
    <location>
        <begin position="164"/>
        <end position="174"/>
    </location>
</feature>
<feature type="compositionally biased region" description="Low complexity" evidence="7">
    <location>
        <begin position="394"/>
        <end position="414"/>
    </location>
</feature>
<feature type="modified residue" description="Phosphothreonine" evidence="2">
    <location>
        <position position="8"/>
    </location>
</feature>
<feature type="modified residue" description="Omega-N-methylarginine" evidence="4">
    <location>
        <position position="23"/>
    </location>
</feature>
<feature type="modified residue" description="Phosphoserine" evidence="2">
    <location>
        <position position="45"/>
    </location>
</feature>
<feature type="modified residue" description="Phosphoserine" evidence="4">
    <location>
        <position position="113"/>
    </location>
</feature>
<feature type="modified residue" description="Phosphoserine" evidence="2">
    <location>
        <position position="134"/>
    </location>
</feature>
<feature type="modified residue" description="Phosphoserine" evidence="4">
    <location>
        <position position="141"/>
    </location>
</feature>
<feature type="modified residue" description="Phosphoserine" evidence="2">
    <location>
        <position position="203"/>
    </location>
</feature>
<feature type="modified residue" description="Phosphoserine" evidence="2">
    <location>
        <position position="211"/>
    </location>
</feature>
<feature type="modified residue" description="Phosphoserine" evidence="2">
    <location>
        <position position="226"/>
    </location>
</feature>
<feature type="modified residue" description="Phosphoserine" evidence="2">
    <location>
        <position position="267"/>
    </location>
</feature>
<feature type="modified residue" description="Phosphoserine" evidence="2">
    <location>
        <position position="404"/>
    </location>
</feature>
<feature type="modified residue" description="N6-acetyllysine" evidence="2">
    <location>
        <position position="480"/>
    </location>
</feature>
<feature type="modified residue" description="N6-acetyllysine" evidence="2">
    <location>
        <position position="492"/>
    </location>
</feature>
<feature type="modified residue" description="N6-acetyllysine" evidence="2">
    <location>
        <position position="494"/>
    </location>
</feature>
<feature type="modified residue" description="N6-acetyllysine" evidence="2">
    <location>
        <position position="495"/>
    </location>
</feature>
<feature type="cross-link" description="Glycyl lysine isopeptide (Lys-Gly) (interchain with G-Cter in SUMO2)" evidence="2">
    <location>
        <position position="258"/>
    </location>
</feature>
<feature type="cross-link" description="Glycyl lysine isopeptide (Lys-Gly) (interchain with G-Cter in SUMO); alternate" evidence="2">
    <location>
        <position position="277"/>
    </location>
</feature>
<feature type="cross-link" description="Glycyl lysine isopeptide (Lys-Gly) (interchain with G-Cter in SUMO2); alternate" evidence="2">
    <location>
        <position position="277"/>
    </location>
</feature>
<feature type="cross-link" description="Glycyl lysine isopeptide (Lys-Gly) (interchain with G-Cter in SUMO); alternate" evidence="2">
    <location>
        <position position="293"/>
    </location>
</feature>
<feature type="cross-link" description="Glycyl lysine isopeptide (Lys-Gly) (interchain with G-Cter in SUMO2); alternate" evidence="2">
    <location>
        <position position="293"/>
    </location>
</feature>
<feature type="cross-link" description="Glycyl lysine isopeptide (Lys-Gly) (interchain with G-Cter in ubiquitin)" evidence="4">
    <location>
        <position position="419"/>
    </location>
</feature>
<feature type="cross-link" description="Glycyl lysine isopeptide (Lys-Gly) (interchain with G-Cter in SUMO)" evidence="2">
    <location>
        <position position="703"/>
    </location>
</feature>
<sequence length="777" mass="85747">MDSKESLTPGKEENPSSVLTQERGNVMDFCKILRGGATLKVSVSSTSLAAASQSDPKQQRLLVDFPKGSVSNVQQPDLSKAVSLSMGLYMGETETKVMGNDLGFPQQGQISLSSGETDLQLLEESIANLNRSTSVPENPKSSASSSVSAAPKEKEFPKTHSDVSSEQQNLKGQTGTNGGNVKLYTADQSTFDILQDLEFSSGSPGKERNQSPWRSDLLIDENCLLSPLAGEEDSFLLEGNSNEDCKPLILPDTKPKIKDNGDLVLSSSSNVTLPQVKTEKEDFIELCTPGVIKQEKLSTVYCQASFPGANIIGNKMSAISIHGVSTSGGQMYHYDMNTASLSQQQDQKPIFNVIPPIPVGSENWNRCQGSGDDNLTSLGTLNFPGRTVFSNGYSSPSMRPDVSSPPSSSSTATTGPPPKLCLVCSDEASGCHYGVLTCGSCKVFFKRAVEGQHNYLCAGRNDCIIDKIRRKNCPACRYRKCLQAGMNLEARKTKKKIKGIQQATTGVSQETSENPANKTIVPATLPQLTPTLVSLLEVIEPEVLYAGYDSTVPDSTWRIMTTLNMLGGRQVIAAVKWAKAIPGFRNLHLDDQMTLLQYSWMFLMAFALGWRSYRQASSNLLCFAPDLIINEQRMTLPCMYDQCKHMLYVSSELHRLQVSYEEYLCMKTLLLLSSVPKDGLKSQELFDEIRMTYIKELGKAIVKREGNSSQNWQRFYQLTKLLDSMHEVVENLLNYCFQTFLDKTMSIEFPEMLAEIITNQLPKYSNGNIKKLLFHQK</sequence>
<protein>
    <recommendedName>
        <fullName>Glucocorticoid receptor</fullName>
        <shortName>GR</shortName>
    </recommendedName>
    <alternativeName>
        <fullName>Nuclear receptor subfamily 3 group C member 1</fullName>
    </alternativeName>
</protein>
<accession>Q6XLJ0</accession>
<gene>
    <name type="primary">NR3C1</name>
    <name type="synonym">GRL</name>
</gene>
<proteinExistence type="evidence at transcript level"/>
<name>GCR_CALJA</name>
<keyword id="KW-0007">Acetylation</keyword>
<keyword id="KW-0156">Chromatin regulator</keyword>
<keyword id="KW-0158">Chromosome</keyword>
<keyword id="KW-0963">Cytoplasm</keyword>
<keyword id="KW-0206">Cytoskeleton</keyword>
<keyword id="KW-0238">DNA-binding</keyword>
<keyword id="KW-1017">Isopeptide bond</keyword>
<keyword id="KW-0446">Lipid-binding</keyword>
<keyword id="KW-0479">Metal-binding</keyword>
<keyword id="KW-0488">Methylation</keyword>
<keyword id="KW-0496">Mitochondrion</keyword>
<keyword id="KW-0539">Nucleus</keyword>
<keyword id="KW-0597">Phosphoprotein</keyword>
<keyword id="KW-0675">Receptor</keyword>
<keyword id="KW-1185">Reference proteome</keyword>
<keyword id="KW-0754">Steroid-binding</keyword>
<keyword id="KW-0804">Transcription</keyword>
<keyword id="KW-0805">Transcription regulation</keyword>
<keyword id="KW-0832">Ubl conjugation</keyword>
<keyword id="KW-0862">Zinc</keyword>
<keyword id="KW-0863">Zinc-finger</keyword>
<comment type="function">
    <text evidence="2 4">Receptor for glucocorticoids (GC). Has a dual mode of action: as a transcription factor that binds to glucocorticoid response elements (GRE), both for nuclear and mitochondrial DNA, and as a modulator of other transcription factors. Affects inflammatory responses, cellular proliferation and differentiation in target tissues. Involved in chromatin remodeling. Plays a role in rapid mRNA degradation by binding to the 5' UTR of target mRNAs and interacting with PNRC2 in a ligand-dependent manner which recruits the RNA helicase UPF1 and the mRNA-decapping enzyme DCP1A, leading to RNA decay. Could act as a coactivator for STAT5-dependent transcription upon growth hormone (GH) stimulation and could reveal an essential role of hepatic GR in the control of body growth. Mediates glucocorticoid-induced apoptosis. Promotes accurate chromosome segregation during mitosis. May act as a tumor suppressor. May play a negative role in adipogenesis through the regulation of lipolytic and antilipogenic gene expression.</text>
</comment>
<comment type="subunit">
    <text evidence="2 3 4">Heteromultimeric cytoplasmic complex with HSP90AA1, HSPA1A/HSPA1B, and FKBP5 or another immunophilin such as PPID, STIP1, or the immunophilin homolog PPP5C. Upon ligand binding FKBP5 dissociates from the complex and FKBP4 takes its place, thereby linking the complex to dynein and mediating transport to the nucleus, where the complex dissociates. Probably forms a complex composed of chaperones HSP90 and HSP70, co-chaperones CDC37, PPP5C, TSC1 and client protein TSC2, CDK4, AKT, RAF1 and NR3C1; this complex does not contain co-chaperones STIP1/HOP and PTGES3/p23. Directly interacts with UNC45A. Binds to DNA as a homodimer, and as heterodimer with NR3C2 or the retinoid X receptor. Binds STAT5A and STAT5B homodimers and heterodimers. Interacts with NRIP1, POU2F1, POU2F2 and TRIM28. Interacts with several coactivator complexes, including the SMARCA4 complex, CREBBP/EP300, TADA2L (Ada complex) and p160 coactivators such as NCOA2 and NCOA6. Interaction with BAG1 inhibits transactivation. Interacts with HEXIM1 and TGFB1I1. Interacts with NCOA1. Interacts with NCOA3, SMARCA4, SMARCC1, SMARCD1, and SMARCE1. Interacts with CLOCK, CRY1 and CRY2 in a ligand-dependent fashion. Interacts with CIART. Interacts with RWDD3. Interacts with UBE2I/UBC9 and this interaction is enhanced in the presence of RWDD3. Interacts with GRIP1. Interacts with NR4A3 (via nuclear receptor DNA-binding domain), represses transcription activity of NR4A3 on the POMC promoter Nur response element (NurRE). Directly interacts with PNRC2 to attract and form a complex with UPF1 and DCP1A; the interaction leads to rapid mRNA degradation. Interacts with GSK3B. Interacts with FNIP1 and FNIP2. Interacts (via C-terminus) with HNRNPU (via C-terminus). Interacts with MCM3AP (By similarity). Interacts (via domain NR LBD) with HSP90AA1 and HSP90AB1 (By similarity). In the absence of hormonal ligand, interacts with TACC1 (By similarity). Interacts (via NR LBD domain) with ZNF764 (via KRAB domain); the interaction regulates transcription factor activity of NR3C1 by directing its actions toward certain biologic pathways (By similarity).</text>
</comment>
<comment type="subcellular location">
    <subcellularLocation>
        <location evidence="2">Cytoplasm</location>
    </subcellularLocation>
    <subcellularLocation>
        <location evidence="2">Nucleus</location>
    </subcellularLocation>
    <subcellularLocation>
        <location evidence="2">Mitochondrion</location>
    </subcellularLocation>
    <subcellularLocation>
        <location evidence="2">Cytoplasm</location>
        <location evidence="2">Cytoskeleton</location>
        <location evidence="2">Spindle</location>
    </subcellularLocation>
    <subcellularLocation>
        <location evidence="2">Cytoplasm</location>
        <location evidence="2">Cytoskeleton</location>
        <location evidence="2">Microtubule organizing center</location>
        <location evidence="2">Centrosome</location>
    </subcellularLocation>
    <subcellularLocation>
        <location evidence="4">Chromosome</location>
    </subcellularLocation>
    <subcellularLocation>
        <location evidence="4">Nucleus</location>
        <location evidence="4">Nucleoplasm</location>
    </subcellularLocation>
    <text evidence="2 4">After ligand activation, translocates from the cytoplasm to the nucleus (By similarity). The hormone-occupied receptor undergoes rapid exchange between chromatin and the nucleoplasmic compartment. In the presence of NR1D1 shows a time-dependent subcellular localization, localizing to the cytoplasm at ZT8 and to the nucleus at ZT20. Lacks this diurnal pattern of localization in the absence of NR1D1, localizing to both nucleus and the cytoplasm at ZT8 and ZT20. Upon dexamethasone binding associates with the glucocorticoid response elements of target genes (By similarity).</text>
</comment>
<comment type="tissue specificity">
    <text evidence="8">Within the infant and adult hippocampal formation, highest expression observed in the DG granule cell layer with moderate levels in the DG hilus, the CA2-CA4 pyramidal cell layer and the proximal part of the CA1 pyramidal cell layer. Moderate to high expression levels found in the presubiculum and in its' superficial layers. Weak but specific expression detected throughout the entire corticle mantle. In the amygdala, moderate levels were detected in the lateral, central and medial nuclei. Moderate expression levels were present in the PVNh alongside the third ventricle.</text>
</comment>
<comment type="domain">
    <text evidence="2">Composed of three domains: a modulating N-terminal domain, a DNA-binding domain and a C-terminal ligand-binding domain. The ligand-binding domain is required for correct chromosome segregation during mitosis although ligand binding is not required.</text>
</comment>
<comment type="PTM">
    <text evidence="1">Acetylation by CLOCK reduces its binding to glucocorticoid response elements and its transcriptional activity.</text>
</comment>
<comment type="PTM">
    <text evidence="2">Increased proteasome-mediated degradation in response to glucocorticoids.</text>
</comment>
<comment type="PTM">
    <text evidence="2 4">Phosphorylated in the absence of hormone; becomes hyperphosphorylated in the presence of glucocorticoid. The Ser-203, Ser-226 and Ser-404-phosphorylated forms are mainly cytoplasmic, and the Ser-211-phosphorylated form is nuclear. Phosphorylation at Ser-211 increases transcriptional activity. Phosphorylation at Ser-203, Ser-226 and Ser-404 decreases signaling capacity. Phosphorylation at Ser-404 may protect from glucocorticoid-induced apoptosis. Phosphorylation at Ser-203 and Ser-211 is not required in regulation of chromosome segregation. May be dephosphorylated by PPP5C, attenuates NR3C1 action.</text>
</comment>
<comment type="PTM">
    <text evidence="4">Ubiquitinated by UBR5, leading to its degradation: UBR5 specifically recognizes and binds ligand-bound NR3C1 when it is not associated with coactivators (NCOAs) (By similarity). In presence of NCOAs, the UBR5-degron is not accessible, preventing its ubiquitination and degradation (By similarity).</text>
</comment>
<comment type="PTM">
    <text evidence="3">Sumoylation at Lys-277 and Lys-293 negatively regulates its transcriptional activity. Sumoylation at Lys-703 positively regulates its transcriptional activity in the presence of RWDD3. Sumoylation at Lys-277 and Lys-293 is dispensable whereas sumoylation at Lys-703 is critical for the stimulatory effect of RWDD3 on its transcriptional activity. Heat shock increases sumoylation in a RWDD3-dependent manner.</text>
</comment>
<comment type="similarity">
    <text evidence="9">Belongs to the nuclear hormone receptor family. NR3 subfamily.</text>
</comment>
<dbReference type="EMBL" id="AY225975">
    <property type="protein sequence ID" value="AAP48589.1"/>
    <property type="molecule type" value="mRNA"/>
</dbReference>
<dbReference type="RefSeq" id="NP_001244179.1">
    <property type="nucleotide sequence ID" value="NM_001257250.2"/>
</dbReference>
<dbReference type="RefSeq" id="XP_008984656.1">
    <property type="nucleotide sequence ID" value="XM_008986408.2"/>
</dbReference>
<dbReference type="RefSeq" id="XP_008984662.1">
    <property type="nucleotide sequence ID" value="XM_008986414.2"/>
</dbReference>
<dbReference type="RefSeq" id="XP_054102553.1">
    <property type="nucleotide sequence ID" value="XM_054246578.1"/>
</dbReference>
<dbReference type="SMR" id="Q6XLJ0"/>
<dbReference type="FunCoup" id="Q6XLJ0">
    <property type="interactions" value="2490"/>
</dbReference>
<dbReference type="STRING" id="9483.ENSCJAP00000033976"/>
<dbReference type="GeneID" id="100394916"/>
<dbReference type="KEGG" id="cjc:100394916"/>
<dbReference type="CTD" id="2908"/>
<dbReference type="eggNOG" id="KOG3575">
    <property type="taxonomic scope" value="Eukaryota"/>
</dbReference>
<dbReference type="HOGENOM" id="CLU_020317_0_0_1"/>
<dbReference type="InParanoid" id="Q6XLJ0"/>
<dbReference type="OrthoDB" id="5789523at2759"/>
<dbReference type="TreeFam" id="TF106510"/>
<dbReference type="Proteomes" id="UP000008225">
    <property type="component" value="Unplaced"/>
</dbReference>
<dbReference type="GO" id="GO:0005813">
    <property type="term" value="C:centrosome"/>
    <property type="evidence" value="ECO:0007669"/>
    <property type="project" value="UniProtKB-SubCell"/>
</dbReference>
<dbReference type="GO" id="GO:0005694">
    <property type="term" value="C:chromosome"/>
    <property type="evidence" value="ECO:0007669"/>
    <property type="project" value="UniProtKB-SubCell"/>
</dbReference>
<dbReference type="GO" id="GO:0005737">
    <property type="term" value="C:cytoplasm"/>
    <property type="evidence" value="ECO:0000250"/>
    <property type="project" value="UniProtKB"/>
</dbReference>
<dbReference type="GO" id="GO:0005739">
    <property type="term" value="C:mitochondrion"/>
    <property type="evidence" value="ECO:0007669"/>
    <property type="project" value="UniProtKB-SubCell"/>
</dbReference>
<dbReference type="GO" id="GO:0016607">
    <property type="term" value="C:nuclear speck"/>
    <property type="evidence" value="ECO:0000250"/>
    <property type="project" value="UniProtKB"/>
</dbReference>
<dbReference type="GO" id="GO:0005634">
    <property type="term" value="C:nucleus"/>
    <property type="evidence" value="ECO:0000250"/>
    <property type="project" value="UniProtKB"/>
</dbReference>
<dbReference type="GO" id="GO:0005819">
    <property type="term" value="C:spindle"/>
    <property type="evidence" value="ECO:0007669"/>
    <property type="project" value="UniProtKB-SubCell"/>
</dbReference>
<dbReference type="GO" id="GO:0003700">
    <property type="term" value="F:DNA-binding transcription factor activity"/>
    <property type="evidence" value="ECO:0000250"/>
    <property type="project" value="UniProtKB"/>
</dbReference>
<dbReference type="GO" id="GO:0004883">
    <property type="term" value="F:nuclear glucocorticoid receptor activity"/>
    <property type="evidence" value="ECO:0007669"/>
    <property type="project" value="InterPro"/>
</dbReference>
<dbReference type="GO" id="GO:0004879">
    <property type="term" value="F:nuclear receptor activity"/>
    <property type="evidence" value="ECO:0000250"/>
    <property type="project" value="UniProtKB"/>
</dbReference>
<dbReference type="GO" id="GO:0043565">
    <property type="term" value="F:sequence-specific DNA binding"/>
    <property type="evidence" value="ECO:0007669"/>
    <property type="project" value="InterPro"/>
</dbReference>
<dbReference type="GO" id="GO:0005496">
    <property type="term" value="F:steroid binding"/>
    <property type="evidence" value="ECO:0000250"/>
    <property type="project" value="UniProtKB"/>
</dbReference>
<dbReference type="GO" id="GO:1990239">
    <property type="term" value="F:steroid hormone binding"/>
    <property type="evidence" value="ECO:0000250"/>
    <property type="project" value="UniProtKB"/>
</dbReference>
<dbReference type="GO" id="GO:0008270">
    <property type="term" value="F:zinc ion binding"/>
    <property type="evidence" value="ECO:0007669"/>
    <property type="project" value="UniProtKB-KW"/>
</dbReference>
<dbReference type="GO" id="GO:0071385">
    <property type="term" value="P:cellular response to glucocorticoid stimulus"/>
    <property type="evidence" value="ECO:0000250"/>
    <property type="project" value="UniProtKB"/>
</dbReference>
<dbReference type="GO" id="GO:0071383">
    <property type="term" value="P:cellular response to steroid hormone stimulus"/>
    <property type="evidence" value="ECO:0000250"/>
    <property type="project" value="UniProtKB"/>
</dbReference>
<dbReference type="GO" id="GO:0006325">
    <property type="term" value="P:chromatin organization"/>
    <property type="evidence" value="ECO:0007669"/>
    <property type="project" value="UniProtKB-KW"/>
</dbReference>
<dbReference type="GO" id="GO:0045944">
    <property type="term" value="P:positive regulation of transcription by RNA polymerase II"/>
    <property type="evidence" value="ECO:0000250"/>
    <property type="project" value="UniProtKB"/>
</dbReference>
<dbReference type="CDD" id="cd07172">
    <property type="entry name" value="NR_DBD_GR_PR"/>
    <property type="match status" value="1"/>
</dbReference>
<dbReference type="CDD" id="cd07076">
    <property type="entry name" value="NR_LBD_GR"/>
    <property type="match status" value="1"/>
</dbReference>
<dbReference type="FunFam" id="1.10.565.10:FF:000004">
    <property type="entry name" value="Androgen receptor variant"/>
    <property type="match status" value="1"/>
</dbReference>
<dbReference type="FunFam" id="3.30.50.10:FF:000022">
    <property type="entry name" value="glucocorticoid receptor isoform X1"/>
    <property type="match status" value="1"/>
</dbReference>
<dbReference type="Gene3D" id="3.30.50.10">
    <property type="entry name" value="Erythroid Transcription Factor GATA-1, subunit A"/>
    <property type="match status" value="1"/>
</dbReference>
<dbReference type="Gene3D" id="1.10.565.10">
    <property type="entry name" value="Retinoid X Receptor"/>
    <property type="match status" value="1"/>
</dbReference>
<dbReference type="InterPro" id="IPR001409">
    <property type="entry name" value="Glcrtcd_rcpt"/>
</dbReference>
<dbReference type="InterPro" id="IPR035500">
    <property type="entry name" value="NHR-like_dom_sf"/>
</dbReference>
<dbReference type="InterPro" id="IPR000536">
    <property type="entry name" value="Nucl_hrmn_rcpt_lig-bd"/>
</dbReference>
<dbReference type="InterPro" id="IPR050200">
    <property type="entry name" value="Nuclear_hormone_rcpt_NR3"/>
</dbReference>
<dbReference type="InterPro" id="IPR001723">
    <property type="entry name" value="Nuclear_hrmn_rcpt"/>
</dbReference>
<dbReference type="InterPro" id="IPR001628">
    <property type="entry name" value="Znf_hrmn_rcpt"/>
</dbReference>
<dbReference type="InterPro" id="IPR013088">
    <property type="entry name" value="Znf_NHR/GATA"/>
</dbReference>
<dbReference type="PANTHER" id="PTHR48092">
    <property type="entry name" value="KNIRPS-RELATED PROTEIN-RELATED"/>
    <property type="match status" value="1"/>
</dbReference>
<dbReference type="Pfam" id="PF02155">
    <property type="entry name" value="GCR"/>
    <property type="match status" value="1"/>
</dbReference>
<dbReference type="Pfam" id="PF00104">
    <property type="entry name" value="Hormone_recep"/>
    <property type="match status" value="1"/>
</dbReference>
<dbReference type="Pfam" id="PF00105">
    <property type="entry name" value="zf-C4"/>
    <property type="match status" value="1"/>
</dbReference>
<dbReference type="PRINTS" id="PR00528">
    <property type="entry name" value="GLCORTICOIDR"/>
</dbReference>
<dbReference type="PRINTS" id="PR00398">
    <property type="entry name" value="STRDHORMONER"/>
</dbReference>
<dbReference type="PRINTS" id="PR00047">
    <property type="entry name" value="STROIDFINGER"/>
</dbReference>
<dbReference type="SMART" id="SM00430">
    <property type="entry name" value="HOLI"/>
    <property type="match status" value="1"/>
</dbReference>
<dbReference type="SMART" id="SM00399">
    <property type="entry name" value="ZnF_C4"/>
    <property type="match status" value="1"/>
</dbReference>
<dbReference type="SUPFAM" id="SSF57716">
    <property type="entry name" value="Glucocorticoid receptor-like (DNA-binding domain)"/>
    <property type="match status" value="1"/>
</dbReference>
<dbReference type="SUPFAM" id="SSF48508">
    <property type="entry name" value="Nuclear receptor ligand-binding domain"/>
    <property type="match status" value="1"/>
</dbReference>
<dbReference type="PROSITE" id="PS51843">
    <property type="entry name" value="NR_LBD"/>
    <property type="match status" value="1"/>
</dbReference>
<dbReference type="PROSITE" id="PS00031">
    <property type="entry name" value="NUCLEAR_REC_DBD_1"/>
    <property type="match status" value="1"/>
</dbReference>
<dbReference type="PROSITE" id="PS51030">
    <property type="entry name" value="NUCLEAR_REC_DBD_2"/>
    <property type="match status" value="1"/>
</dbReference>
<reference key="1">
    <citation type="journal article" date="2005" name="Eur. J. Neurosci.">
        <title>Postnatal ontogeny of hippocampal expression of the mineralocorticoid and glucocorticoid receptors in the common marmoset monkey.</title>
        <authorList>
            <person name="Pryce C.R."/>
            <person name="Feldon J."/>
            <person name="Fuchs E."/>
            <person name="Knuesel I."/>
            <person name="Oertle T."/>
            <person name="Sengstag C."/>
            <person name="Spengler M."/>
            <person name="Weber E."/>
            <person name="Weston A."/>
            <person name="Jongen-Relo A."/>
        </authorList>
    </citation>
    <scope>NUCLEOTIDE SEQUENCE [MRNA]</scope>
    <scope>TISSUE SPECIFICITY</scope>
    <source>
        <tissue>Hippocampus</tissue>
    </source>
</reference>